<dbReference type="EC" id="2.7.4.6" evidence="1"/>
<dbReference type="EMBL" id="AE001363">
    <property type="protein sequence ID" value="AAD18758.1"/>
    <property type="molecule type" value="Genomic_DNA"/>
</dbReference>
<dbReference type="EMBL" id="AE002161">
    <property type="protein sequence ID" value="AAF38011.1"/>
    <property type="molecule type" value="Genomic_DNA"/>
</dbReference>
<dbReference type="EMBL" id="BA000008">
    <property type="protein sequence ID" value="BAA98826.1"/>
    <property type="molecule type" value="Genomic_DNA"/>
</dbReference>
<dbReference type="EMBL" id="AE009440">
    <property type="protein sequence ID" value="AAP98574.1"/>
    <property type="molecule type" value="Genomic_DNA"/>
</dbReference>
<dbReference type="PIR" id="G72056">
    <property type="entry name" value="G72056"/>
</dbReference>
<dbReference type="PIR" id="H86567">
    <property type="entry name" value="H86567"/>
</dbReference>
<dbReference type="RefSeq" id="NP_224815.1">
    <property type="nucleotide sequence ID" value="NC_000922.1"/>
</dbReference>
<dbReference type="RefSeq" id="WP_010883257.1">
    <property type="nucleotide sequence ID" value="NZ_LN847257.1"/>
</dbReference>
<dbReference type="SMR" id="Q9Z7T5"/>
<dbReference type="STRING" id="406984.CPK_ORF00018"/>
<dbReference type="GeneID" id="45050668"/>
<dbReference type="KEGG" id="cpa:CP_0128"/>
<dbReference type="KEGG" id="cpj:ndk"/>
<dbReference type="KEGG" id="cpn:CPn_0619"/>
<dbReference type="KEGG" id="cpt:CpB0645"/>
<dbReference type="PATRIC" id="fig|115713.3.peg.689"/>
<dbReference type="eggNOG" id="COG0105">
    <property type="taxonomic scope" value="Bacteria"/>
</dbReference>
<dbReference type="HOGENOM" id="CLU_060216_8_1_0"/>
<dbReference type="OMA" id="QHYGEHK"/>
<dbReference type="OrthoDB" id="9801161at2"/>
<dbReference type="Proteomes" id="UP000000583">
    <property type="component" value="Chromosome"/>
</dbReference>
<dbReference type="Proteomes" id="UP000000801">
    <property type="component" value="Chromosome"/>
</dbReference>
<dbReference type="GO" id="GO:0005737">
    <property type="term" value="C:cytoplasm"/>
    <property type="evidence" value="ECO:0007669"/>
    <property type="project" value="UniProtKB-SubCell"/>
</dbReference>
<dbReference type="GO" id="GO:0005524">
    <property type="term" value="F:ATP binding"/>
    <property type="evidence" value="ECO:0007669"/>
    <property type="project" value="UniProtKB-UniRule"/>
</dbReference>
<dbReference type="GO" id="GO:0046872">
    <property type="term" value="F:metal ion binding"/>
    <property type="evidence" value="ECO:0007669"/>
    <property type="project" value="UniProtKB-KW"/>
</dbReference>
<dbReference type="GO" id="GO:0004550">
    <property type="term" value="F:nucleoside diphosphate kinase activity"/>
    <property type="evidence" value="ECO:0007669"/>
    <property type="project" value="UniProtKB-UniRule"/>
</dbReference>
<dbReference type="GO" id="GO:0006241">
    <property type="term" value="P:CTP biosynthetic process"/>
    <property type="evidence" value="ECO:0007669"/>
    <property type="project" value="UniProtKB-UniRule"/>
</dbReference>
<dbReference type="GO" id="GO:0006183">
    <property type="term" value="P:GTP biosynthetic process"/>
    <property type="evidence" value="ECO:0007669"/>
    <property type="project" value="UniProtKB-UniRule"/>
</dbReference>
<dbReference type="GO" id="GO:0006228">
    <property type="term" value="P:UTP biosynthetic process"/>
    <property type="evidence" value="ECO:0007669"/>
    <property type="project" value="UniProtKB-UniRule"/>
</dbReference>
<dbReference type="CDD" id="cd04413">
    <property type="entry name" value="NDPk_I"/>
    <property type="match status" value="1"/>
</dbReference>
<dbReference type="FunFam" id="3.30.70.141:FF:000001">
    <property type="entry name" value="Nucleoside diphosphate kinase"/>
    <property type="match status" value="1"/>
</dbReference>
<dbReference type="Gene3D" id="3.30.70.141">
    <property type="entry name" value="Nucleoside diphosphate kinase-like domain"/>
    <property type="match status" value="1"/>
</dbReference>
<dbReference type="HAMAP" id="MF_00451">
    <property type="entry name" value="NDP_kinase"/>
    <property type="match status" value="1"/>
</dbReference>
<dbReference type="InterPro" id="IPR034907">
    <property type="entry name" value="NDK-like_dom"/>
</dbReference>
<dbReference type="InterPro" id="IPR036850">
    <property type="entry name" value="NDK-like_dom_sf"/>
</dbReference>
<dbReference type="InterPro" id="IPR001564">
    <property type="entry name" value="Nucleoside_diP_kinase"/>
</dbReference>
<dbReference type="NCBIfam" id="NF001908">
    <property type="entry name" value="PRK00668.1"/>
    <property type="match status" value="1"/>
</dbReference>
<dbReference type="PANTHER" id="PTHR11349">
    <property type="entry name" value="NUCLEOSIDE DIPHOSPHATE KINASE"/>
    <property type="match status" value="1"/>
</dbReference>
<dbReference type="Pfam" id="PF00334">
    <property type="entry name" value="NDK"/>
    <property type="match status" value="1"/>
</dbReference>
<dbReference type="PRINTS" id="PR01243">
    <property type="entry name" value="NUCDPKINASE"/>
</dbReference>
<dbReference type="SMART" id="SM00562">
    <property type="entry name" value="NDK"/>
    <property type="match status" value="1"/>
</dbReference>
<dbReference type="SUPFAM" id="SSF54919">
    <property type="entry name" value="Nucleoside diphosphate kinase, NDK"/>
    <property type="match status" value="1"/>
</dbReference>
<dbReference type="PROSITE" id="PS51374">
    <property type="entry name" value="NDPK_LIKE"/>
    <property type="match status" value="1"/>
</dbReference>
<evidence type="ECO:0000255" key="1">
    <source>
        <dbReference type="HAMAP-Rule" id="MF_00451"/>
    </source>
</evidence>
<evidence type="ECO:0000305" key="2"/>
<protein>
    <recommendedName>
        <fullName evidence="1">Nucleoside diphosphate kinase</fullName>
        <shortName evidence="1">NDK</shortName>
        <shortName evidence="1">NDP kinase</shortName>
        <ecNumber evidence="1">2.7.4.6</ecNumber>
    </recommendedName>
    <alternativeName>
        <fullName evidence="1">Nucleoside-2-P kinase</fullName>
    </alternativeName>
</protein>
<feature type="chain" id="PRO_0000136966" description="Nucleoside diphosphate kinase">
    <location>
        <begin position="1"/>
        <end position="144"/>
    </location>
</feature>
<feature type="active site" description="Pros-phosphohistidine intermediate" evidence="1">
    <location>
        <position position="115"/>
    </location>
</feature>
<feature type="binding site" evidence="1">
    <location>
        <position position="9"/>
    </location>
    <ligand>
        <name>ATP</name>
        <dbReference type="ChEBI" id="CHEBI:30616"/>
    </ligand>
</feature>
<feature type="binding site" evidence="1">
    <location>
        <position position="57"/>
    </location>
    <ligand>
        <name>ATP</name>
        <dbReference type="ChEBI" id="CHEBI:30616"/>
    </ligand>
</feature>
<feature type="binding site" evidence="1">
    <location>
        <position position="85"/>
    </location>
    <ligand>
        <name>ATP</name>
        <dbReference type="ChEBI" id="CHEBI:30616"/>
    </ligand>
</feature>
<feature type="binding site" evidence="1">
    <location>
        <position position="91"/>
    </location>
    <ligand>
        <name>ATP</name>
        <dbReference type="ChEBI" id="CHEBI:30616"/>
    </ligand>
</feature>
<feature type="binding site" evidence="1">
    <location>
        <position position="102"/>
    </location>
    <ligand>
        <name>ATP</name>
        <dbReference type="ChEBI" id="CHEBI:30616"/>
    </ligand>
</feature>
<feature type="binding site" evidence="1">
    <location>
        <position position="112"/>
    </location>
    <ligand>
        <name>ATP</name>
        <dbReference type="ChEBI" id="CHEBI:30616"/>
    </ligand>
</feature>
<accession>Q9Z7T5</accession>
<proteinExistence type="inferred from homology"/>
<name>NDK_CHLPN</name>
<sequence length="144" mass="15642">MEQTLSIIKPDSVSKAHIGEILSIFEQSGLRIAAMKMMHLSQTEAEGFYFVHRERPFFQELVDFMVSGPVVVLVLEGANAVSRNRELMGATNPAEAASGTIRAKFGESIGVNAVHGSDTLENAAVEIAYFFSKIEVVNASKPLV</sequence>
<comment type="function">
    <text evidence="1">Major role in the synthesis of nucleoside triphosphates other than ATP. The ATP gamma phosphate is transferred to the NDP beta phosphate via a ping-pong mechanism, using a phosphorylated active-site intermediate.</text>
</comment>
<comment type="catalytic activity">
    <reaction evidence="1">
        <text>a 2'-deoxyribonucleoside 5'-diphosphate + ATP = a 2'-deoxyribonucleoside 5'-triphosphate + ADP</text>
        <dbReference type="Rhea" id="RHEA:44640"/>
        <dbReference type="ChEBI" id="CHEBI:30616"/>
        <dbReference type="ChEBI" id="CHEBI:61560"/>
        <dbReference type="ChEBI" id="CHEBI:73316"/>
        <dbReference type="ChEBI" id="CHEBI:456216"/>
        <dbReference type="EC" id="2.7.4.6"/>
    </reaction>
</comment>
<comment type="catalytic activity">
    <reaction evidence="1">
        <text>a ribonucleoside 5'-diphosphate + ATP = a ribonucleoside 5'-triphosphate + ADP</text>
        <dbReference type="Rhea" id="RHEA:18113"/>
        <dbReference type="ChEBI" id="CHEBI:30616"/>
        <dbReference type="ChEBI" id="CHEBI:57930"/>
        <dbReference type="ChEBI" id="CHEBI:61557"/>
        <dbReference type="ChEBI" id="CHEBI:456216"/>
        <dbReference type="EC" id="2.7.4.6"/>
    </reaction>
</comment>
<comment type="cofactor">
    <cofactor evidence="1">
        <name>Mg(2+)</name>
        <dbReference type="ChEBI" id="CHEBI:18420"/>
    </cofactor>
</comment>
<comment type="subunit">
    <text evidence="1">Homotetramer.</text>
</comment>
<comment type="subcellular location">
    <subcellularLocation>
        <location evidence="1">Cytoplasm</location>
    </subcellularLocation>
</comment>
<comment type="similarity">
    <text evidence="1 2">Belongs to the NDK family.</text>
</comment>
<organism>
    <name type="scientific">Chlamydia pneumoniae</name>
    <name type="common">Chlamydophila pneumoniae</name>
    <dbReference type="NCBI Taxonomy" id="83558"/>
    <lineage>
        <taxon>Bacteria</taxon>
        <taxon>Pseudomonadati</taxon>
        <taxon>Chlamydiota</taxon>
        <taxon>Chlamydiia</taxon>
        <taxon>Chlamydiales</taxon>
        <taxon>Chlamydiaceae</taxon>
        <taxon>Chlamydia/Chlamydophila group</taxon>
        <taxon>Chlamydia</taxon>
    </lineage>
</organism>
<keyword id="KW-0067">ATP-binding</keyword>
<keyword id="KW-0963">Cytoplasm</keyword>
<keyword id="KW-0418">Kinase</keyword>
<keyword id="KW-0460">Magnesium</keyword>
<keyword id="KW-0479">Metal-binding</keyword>
<keyword id="KW-0546">Nucleotide metabolism</keyword>
<keyword id="KW-0547">Nucleotide-binding</keyword>
<keyword id="KW-0597">Phosphoprotein</keyword>
<keyword id="KW-0808">Transferase</keyword>
<reference key="1">
    <citation type="journal article" date="1999" name="Nat. Genet.">
        <title>Comparative genomes of Chlamydia pneumoniae and C. trachomatis.</title>
        <authorList>
            <person name="Kalman S."/>
            <person name="Mitchell W.P."/>
            <person name="Marathe R."/>
            <person name="Lammel C.J."/>
            <person name="Fan J."/>
            <person name="Hyman R.W."/>
            <person name="Olinger L."/>
            <person name="Grimwood J."/>
            <person name="Davis R.W."/>
            <person name="Stephens R.S."/>
        </authorList>
    </citation>
    <scope>NUCLEOTIDE SEQUENCE [LARGE SCALE GENOMIC DNA]</scope>
    <source>
        <strain>CWL029</strain>
    </source>
</reference>
<reference key="2">
    <citation type="journal article" date="2000" name="Nucleic Acids Res.">
        <title>Genome sequences of Chlamydia trachomatis MoPn and Chlamydia pneumoniae AR39.</title>
        <authorList>
            <person name="Read T.D."/>
            <person name="Brunham R.C."/>
            <person name="Shen C."/>
            <person name="Gill S.R."/>
            <person name="Heidelberg J.F."/>
            <person name="White O."/>
            <person name="Hickey E.K."/>
            <person name="Peterson J.D."/>
            <person name="Utterback T.R."/>
            <person name="Berry K.J."/>
            <person name="Bass S."/>
            <person name="Linher K.D."/>
            <person name="Weidman J.F."/>
            <person name="Khouri H.M."/>
            <person name="Craven B."/>
            <person name="Bowman C."/>
            <person name="Dodson R.J."/>
            <person name="Gwinn M.L."/>
            <person name="Nelson W.C."/>
            <person name="DeBoy R.T."/>
            <person name="Kolonay J.F."/>
            <person name="McClarty G."/>
            <person name="Salzberg S.L."/>
            <person name="Eisen J.A."/>
            <person name="Fraser C.M."/>
        </authorList>
    </citation>
    <scope>NUCLEOTIDE SEQUENCE [LARGE SCALE GENOMIC DNA]</scope>
    <source>
        <strain>AR39</strain>
    </source>
</reference>
<reference key="3">
    <citation type="journal article" date="2000" name="Nucleic Acids Res.">
        <title>Comparison of whole genome sequences of Chlamydia pneumoniae J138 from Japan and CWL029 from USA.</title>
        <authorList>
            <person name="Shirai M."/>
            <person name="Hirakawa H."/>
            <person name="Kimoto M."/>
            <person name="Tabuchi M."/>
            <person name="Kishi F."/>
            <person name="Ouchi K."/>
            <person name="Shiba T."/>
            <person name="Ishii K."/>
            <person name="Hattori M."/>
            <person name="Kuhara S."/>
            <person name="Nakazawa T."/>
        </authorList>
    </citation>
    <scope>NUCLEOTIDE SEQUENCE [LARGE SCALE GENOMIC DNA]</scope>
    <source>
        <strain>J138</strain>
    </source>
</reference>
<reference key="4">
    <citation type="submission" date="2002-05" db="EMBL/GenBank/DDBJ databases">
        <title>The genome sequence of Chlamydia pneumoniae TW183 and comparison with other Chlamydia strains based on whole genome sequence analysis.</title>
        <authorList>
            <person name="Geng M.M."/>
            <person name="Schuhmacher A."/>
            <person name="Muehldorfer I."/>
            <person name="Bensch K.W."/>
            <person name="Schaefer K.P."/>
            <person name="Schneider S."/>
            <person name="Pohl T."/>
            <person name="Essig A."/>
            <person name="Marre R."/>
            <person name="Melchers K."/>
        </authorList>
    </citation>
    <scope>NUCLEOTIDE SEQUENCE [LARGE SCALE GENOMIC DNA]</scope>
    <source>
        <strain>TW-183</strain>
    </source>
</reference>
<gene>
    <name evidence="1" type="primary">ndk</name>
    <name type="ordered locus">CPn_0619</name>
    <name type="ordered locus">CP_0128</name>
    <name type="ordered locus">CpB0645</name>
</gene>